<keyword id="KW-0520">NAD</keyword>
<keyword id="KW-0560">Oxidoreductase</keyword>
<keyword id="KW-0614">Plasmid</keyword>
<dbReference type="EC" id="1.1.1.-" evidence="1"/>
<dbReference type="EMBL" id="AY150579">
    <property type="protein sequence ID" value="AAN64237.1"/>
    <property type="molecule type" value="Genomic_DNA"/>
</dbReference>
<dbReference type="EMBL" id="CP013070">
    <property type="protein sequence ID" value="APL96346.1"/>
    <property type="status" value="ALT_INIT"/>
    <property type="molecule type" value="Genomic_DNA"/>
</dbReference>
<dbReference type="EMBL" id="CP013071">
    <property type="protein sequence ID" value="APL96546.1"/>
    <property type="status" value="ALT_INIT"/>
    <property type="molecule type" value="Genomic_DNA"/>
</dbReference>
<dbReference type="RefSeq" id="WP_007682029.1">
    <property type="nucleotide sequence ID" value="NZ_CP013071.1"/>
</dbReference>
<dbReference type="SMR" id="A0A1L5BU05"/>
<dbReference type="GeneID" id="29273459"/>
<dbReference type="KEGG" id="sinb:SIDU_11340"/>
<dbReference type="KEGG" id="sinb:SIDU_17875"/>
<dbReference type="Proteomes" id="UP000004550">
    <property type="component" value="Chromosome"/>
</dbReference>
<dbReference type="Proteomes" id="UP000004550">
    <property type="component" value="Plasmid pSRL1"/>
</dbReference>
<dbReference type="GO" id="GO:0018502">
    <property type="term" value="F:2,5-dichloro-2,5-cyclohexadiene-1,4-diol dehydrogenase activity"/>
    <property type="evidence" value="ECO:0007669"/>
    <property type="project" value="RHEA"/>
</dbReference>
<dbReference type="FunFam" id="3.40.50.720:FF:000084">
    <property type="entry name" value="Short-chain dehydrogenase reductase"/>
    <property type="match status" value="1"/>
</dbReference>
<dbReference type="Gene3D" id="3.40.50.720">
    <property type="entry name" value="NAD(P)-binding Rossmann-like Domain"/>
    <property type="match status" value="1"/>
</dbReference>
<dbReference type="InterPro" id="IPR036291">
    <property type="entry name" value="NAD(P)-bd_dom_sf"/>
</dbReference>
<dbReference type="InterPro" id="IPR020904">
    <property type="entry name" value="Sc_DH/Rdtase_CS"/>
</dbReference>
<dbReference type="InterPro" id="IPR002347">
    <property type="entry name" value="SDR_fam"/>
</dbReference>
<dbReference type="NCBIfam" id="NF005559">
    <property type="entry name" value="PRK07231.1"/>
    <property type="match status" value="1"/>
</dbReference>
<dbReference type="PANTHER" id="PTHR43639">
    <property type="entry name" value="OXIDOREDUCTASE, SHORT-CHAIN DEHYDROGENASE/REDUCTASE FAMILY (AFU_ORTHOLOGUE AFUA_5G02870)"/>
    <property type="match status" value="1"/>
</dbReference>
<dbReference type="PANTHER" id="PTHR43639:SF1">
    <property type="entry name" value="SHORT-CHAIN DEHYDROGENASE_REDUCTASE FAMILY PROTEIN"/>
    <property type="match status" value="1"/>
</dbReference>
<dbReference type="Pfam" id="PF13561">
    <property type="entry name" value="adh_short_C2"/>
    <property type="match status" value="1"/>
</dbReference>
<dbReference type="PRINTS" id="PR00081">
    <property type="entry name" value="GDHRDH"/>
</dbReference>
<dbReference type="PRINTS" id="PR00080">
    <property type="entry name" value="SDRFAMILY"/>
</dbReference>
<dbReference type="SUPFAM" id="SSF51735">
    <property type="entry name" value="NAD(P)-binding Rossmann-fold domains"/>
    <property type="match status" value="1"/>
</dbReference>
<dbReference type="PROSITE" id="PS00061">
    <property type="entry name" value="ADH_SHORT"/>
    <property type="match status" value="1"/>
</dbReference>
<protein>
    <recommendedName>
        <fullName evidence="1">2,5-dichloro-2,5-cyclohexadiene-1,4-diol dehydrogenase LinX</fullName>
        <shortName evidence="1">2,5-DDOL dehydrogenase</shortName>
        <ecNumber evidence="1">1.1.1.-</ecNumber>
    </recommendedName>
</protein>
<comment type="function">
    <text evidence="1">Catalyzes the degradation of 2,5-dichloro-2,5-cyclohexadiene-1,4-diol (2,5-DDOL) into 2,5-dichlorohydroquinone (2,5-DCHQ) in vitro. LinX appears not to be involved in gamma-hexachlorocyclohexane (gamma-HCH) degradation pathway, in contrast to LinC which has the same enzymatic activity.</text>
</comment>
<comment type="catalytic activity">
    <reaction evidence="1">
        <text>2,5-dichlorocyclohexa-2,5-dien-1,4-diol + NAD(+) = 2,5-dichlorohydroquinone + NADH + H(+)</text>
        <dbReference type="Rhea" id="RHEA:15741"/>
        <dbReference type="ChEBI" id="CHEBI:15378"/>
        <dbReference type="ChEBI" id="CHEBI:27545"/>
        <dbReference type="ChEBI" id="CHEBI:28975"/>
        <dbReference type="ChEBI" id="CHEBI:57540"/>
        <dbReference type="ChEBI" id="CHEBI:57945"/>
    </reaction>
</comment>
<comment type="similarity">
    <text evidence="4">Belongs to the short-chain dehydrogenases/reductases (SDR) family.</text>
</comment>
<comment type="sequence caution" evidence="4">
    <conflict type="erroneous initiation">
        <sequence resource="EMBL-CDS" id="APL96346"/>
    </conflict>
    <text>Truncated N-terminus.</text>
</comment>
<comment type="sequence caution" evidence="4">
    <conflict type="erroneous initiation">
        <sequence resource="EMBL-CDS" id="APL96546"/>
    </conflict>
    <text>Truncated N-terminus.</text>
</comment>
<sequence length="250" mass="25520">MANRLAGKVALITGGASGLGAAQAKRFAEEGAKVVIGDLNEEMAKGVVAEIRAAGGDALFIRLDVTDAASWNNAIAAAVEAFGGLTTLSNTAGIIHPGGFEEESIEGWNKMVAVNQTAIFLGIKAAIPELVKSGNGSIINISSLIGMFPTAGNASYCATKAAVRIMSKAAALEFVDRGVRVNTIVPGGMNTPITANVPPDVLKQQTSQIPMGKLGDPIDIANGALFLASDEAKYITGVDLPIDGGWSVGV</sequence>
<organism>
    <name type="scientific">Sphingobium indicum (strain DSM 16412 / CCM 7286 / MTCC 6364 / B90A)</name>
    <dbReference type="NCBI Taxonomy" id="861109"/>
    <lineage>
        <taxon>Bacteria</taxon>
        <taxon>Pseudomonadati</taxon>
        <taxon>Pseudomonadota</taxon>
        <taxon>Alphaproteobacteria</taxon>
        <taxon>Sphingomonadales</taxon>
        <taxon>Sphingomonadaceae</taxon>
        <taxon>Sphingobium</taxon>
    </lineage>
</organism>
<evidence type="ECO:0000250" key="1">
    <source>
        <dbReference type="UniProtKB" id="D4Z260"/>
    </source>
</evidence>
<evidence type="ECO:0000250" key="2">
    <source>
        <dbReference type="UniProtKB" id="P9WGT1"/>
    </source>
</evidence>
<evidence type="ECO:0000303" key="3">
    <source>
    </source>
</evidence>
<evidence type="ECO:0000305" key="4"/>
<evidence type="ECO:0000312" key="5">
    <source>
        <dbReference type="EMBL" id="APL96346.1"/>
    </source>
</evidence>
<evidence type="ECO:0000312" key="6">
    <source>
        <dbReference type="EMBL" id="APL96546.1"/>
    </source>
</evidence>
<geneLocation type="plasmid" evidence="6">
    <name>pSRL1</name>
</geneLocation>
<feature type="chain" id="PRO_0000444943" description="2,5-dichloro-2,5-cyclohexadiene-1,4-diol dehydrogenase LinX">
    <location>
        <begin position="1"/>
        <end position="250"/>
    </location>
</feature>
<feature type="active site" description="Proton acceptor" evidence="2">
    <location>
        <position position="156"/>
    </location>
</feature>
<feature type="binding site" evidence="2">
    <location>
        <position position="38"/>
    </location>
    <ligand>
        <name>NAD(+)</name>
        <dbReference type="ChEBI" id="CHEBI:57540"/>
    </ligand>
</feature>
<feature type="binding site" evidence="2">
    <location>
        <position position="64"/>
    </location>
    <ligand>
        <name>NAD(+)</name>
        <dbReference type="ChEBI" id="CHEBI:57540"/>
    </ligand>
</feature>
<feature type="binding site" evidence="2">
    <location>
        <position position="65"/>
    </location>
    <ligand>
        <name>NAD(+)</name>
        <dbReference type="ChEBI" id="CHEBI:57540"/>
    </ligand>
</feature>
<feature type="binding site" evidence="2">
    <location>
        <position position="156"/>
    </location>
    <ligand>
        <name>NAD(+)</name>
        <dbReference type="ChEBI" id="CHEBI:57540"/>
    </ligand>
</feature>
<feature type="binding site" evidence="2">
    <location>
        <position position="160"/>
    </location>
    <ligand>
        <name>NAD(+)</name>
        <dbReference type="ChEBI" id="CHEBI:57540"/>
    </ligand>
</feature>
<feature type="binding site" evidence="2">
    <location>
        <position position="191"/>
    </location>
    <ligand>
        <name>NAD(+)</name>
        <dbReference type="ChEBI" id="CHEBI:57540"/>
    </ligand>
</feature>
<feature type="binding site" evidence="2">
    <location>
        <position position="194"/>
    </location>
    <ligand>
        <name>NAD(+)</name>
        <dbReference type="ChEBI" id="CHEBI:57540"/>
    </ligand>
</feature>
<gene>
    <name evidence="3" type="primary">linX</name>
    <name evidence="5" type="ORF">SIDU_11340</name>
    <name evidence="6" type="ORF">SIDU_17875</name>
</gene>
<proteinExistence type="inferred from homology"/>
<accession>A0A1L5BU05</accession>
<accession>P50198</accession>
<reference key="1">
    <citation type="journal article" date="2002" name="Appl. Environ. Microbiol.">
        <title>Cloning and characterization of lin genes responsible for the degradation of hexachlorocyclohexane isomers by Sphingomonas paucimobilis strain B90.</title>
        <authorList>
            <person name="Kumari R."/>
            <person name="Subudhi S."/>
            <person name="Suar M."/>
            <person name="Dhingra G."/>
            <person name="Raina V."/>
            <person name="Dogra C."/>
            <person name="Lal S."/>
            <person name="van der Meer J.R."/>
            <person name="Holliger C."/>
            <person name="Lal R."/>
        </authorList>
    </citation>
    <scope>NUCLEOTIDE SEQUENCE [GENOMIC DNA]</scope>
    <source>
        <strain>B90</strain>
    </source>
</reference>
<reference key="2">
    <citation type="journal article" date="2012" name="J. Bacteriol.">
        <title>Genome sequence of Sphingobium indicum B90A, a hexachlorocyclohexane-degrading bacterium.</title>
        <authorList>
            <person name="Anand S."/>
            <person name="Sangwan N."/>
            <person name="Lata P."/>
            <person name="Kaur J."/>
            <person name="Dua A."/>
            <person name="Singh A.K."/>
            <person name="Verma M."/>
            <person name="Kaur J."/>
            <person name="Khurana J.P."/>
            <person name="Khurana P."/>
            <person name="Mathur S."/>
            <person name="Lal R."/>
        </authorList>
    </citation>
    <scope>NUCLEOTIDE SEQUENCE [LARGE SCALE GENOMIC DNA]</scope>
    <source>
        <strain>DSM 16412 / CCM 7286 / MTCC 6364 / B90A</strain>
        <plasmid>pSRL1</plasmid>
    </source>
</reference>
<name>LINX_SPHIB</name>